<sequence length="234" mass="25551">MVSKFDTQHLLNSNTALVAGVDEAGRGPLAGPVVVAAVVFDPSQPHINGLNDSKQLSPACRERLYAHIVERALAYKVVMIDSTQIDTLNIYQATMLGMRLAVEGVAHVAKSARIDGNRLPKNLPCPAEALVGGDARDPTIMAASILAKVTRDRHMVELHLQYPHYGFDKHKGYGTPAHLAALAEHGPCLEHRQSFAPVRRMLTPKAIHARQSAHQHNENSPTKAAFNMLIERDD</sequence>
<dbReference type="EC" id="3.1.26.4" evidence="1"/>
<dbReference type="EMBL" id="CP001011">
    <property type="protein sequence ID" value="ACB91765.1"/>
    <property type="molecule type" value="Genomic_DNA"/>
</dbReference>
<dbReference type="RefSeq" id="WP_004089339.1">
    <property type="nucleotide sequence ID" value="NC_010577.1"/>
</dbReference>
<dbReference type="SMR" id="B2I7N7"/>
<dbReference type="KEGG" id="xfn:XfasM23_0317"/>
<dbReference type="HOGENOM" id="CLU_036532_3_2_6"/>
<dbReference type="Proteomes" id="UP000001698">
    <property type="component" value="Chromosome"/>
</dbReference>
<dbReference type="GO" id="GO:0005737">
    <property type="term" value="C:cytoplasm"/>
    <property type="evidence" value="ECO:0007669"/>
    <property type="project" value="UniProtKB-SubCell"/>
</dbReference>
<dbReference type="GO" id="GO:0032299">
    <property type="term" value="C:ribonuclease H2 complex"/>
    <property type="evidence" value="ECO:0007669"/>
    <property type="project" value="TreeGrafter"/>
</dbReference>
<dbReference type="GO" id="GO:0030145">
    <property type="term" value="F:manganese ion binding"/>
    <property type="evidence" value="ECO:0007669"/>
    <property type="project" value="UniProtKB-UniRule"/>
</dbReference>
<dbReference type="GO" id="GO:0003723">
    <property type="term" value="F:RNA binding"/>
    <property type="evidence" value="ECO:0007669"/>
    <property type="project" value="InterPro"/>
</dbReference>
<dbReference type="GO" id="GO:0004523">
    <property type="term" value="F:RNA-DNA hybrid ribonuclease activity"/>
    <property type="evidence" value="ECO:0007669"/>
    <property type="project" value="UniProtKB-UniRule"/>
</dbReference>
<dbReference type="GO" id="GO:0043137">
    <property type="term" value="P:DNA replication, removal of RNA primer"/>
    <property type="evidence" value="ECO:0007669"/>
    <property type="project" value="TreeGrafter"/>
</dbReference>
<dbReference type="GO" id="GO:0006298">
    <property type="term" value="P:mismatch repair"/>
    <property type="evidence" value="ECO:0007669"/>
    <property type="project" value="TreeGrafter"/>
</dbReference>
<dbReference type="CDD" id="cd07182">
    <property type="entry name" value="RNase_HII_bacteria_HII_like"/>
    <property type="match status" value="1"/>
</dbReference>
<dbReference type="FunFam" id="3.30.420.10:FF:000006">
    <property type="entry name" value="Ribonuclease HII"/>
    <property type="match status" value="1"/>
</dbReference>
<dbReference type="Gene3D" id="3.30.420.10">
    <property type="entry name" value="Ribonuclease H-like superfamily/Ribonuclease H"/>
    <property type="match status" value="1"/>
</dbReference>
<dbReference type="HAMAP" id="MF_00052_B">
    <property type="entry name" value="RNase_HII_B"/>
    <property type="match status" value="1"/>
</dbReference>
<dbReference type="InterPro" id="IPR022898">
    <property type="entry name" value="RNase_HII"/>
</dbReference>
<dbReference type="InterPro" id="IPR001352">
    <property type="entry name" value="RNase_HII/HIII"/>
</dbReference>
<dbReference type="InterPro" id="IPR024567">
    <property type="entry name" value="RNase_HII/HIII_dom"/>
</dbReference>
<dbReference type="InterPro" id="IPR012337">
    <property type="entry name" value="RNaseH-like_sf"/>
</dbReference>
<dbReference type="InterPro" id="IPR036397">
    <property type="entry name" value="RNaseH_sf"/>
</dbReference>
<dbReference type="NCBIfam" id="NF000595">
    <property type="entry name" value="PRK00015.1-3"/>
    <property type="match status" value="1"/>
</dbReference>
<dbReference type="PANTHER" id="PTHR10954">
    <property type="entry name" value="RIBONUCLEASE H2 SUBUNIT A"/>
    <property type="match status" value="1"/>
</dbReference>
<dbReference type="PANTHER" id="PTHR10954:SF18">
    <property type="entry name" value="RIBONUCLEASE HII"/>
    <property type="match status" value="1"/>
</dbReference>
<dbReference type="Pfam" id="PF01351">
    <property type="entry name" value="RNase_HII"/>
    <property type="match status" value="1"/>
</dbReference>
<dbReference type="SUPFAM" id="SSF53098">
    <property type="entry name" value="Ribonuclease H-like"/>
    <property type="match status" value="1"/>
</dbReference>
<dbReference type="PROSITE" id="PS51975">
    <property type="entry name" value="RNASE_H_2"/>
    <property type="match status" value="1"/>
</dbReference>
<accession>B2I7N7</accession>
<reference key="1">
    <citation type="journal article" date="2010" name="J. Bacteriol.">
        <title>Whole genome sequences of two Xylella fastidiosa strains (M12 and M23) causing almond leaf scorch disease in California.</title>
        <authorList>
            <person name="Chen J."/>
            <person name="Xie G."/>
            <person name="Han S."/>
            <person name="Chertkov O."/>
            <person name="Sims D."/>
            <person name="Civerolo E.L."/>
        </authorList>
    </citation>
    <scope>NUCLEOTIDE SEQUENCE [LARGE SCALE GENOMIC DNA]</scope>
    <source>
        <strain>M23</strain>
    </source>
</reference>
<evidence type="ECO:0000255" key="1">
    <source>
        <dbReference type="HAMAP-Rule" id="MF_00052"/>
    </source>
</evidence>
<evidence type="ECO:0000255" key="2">
    <source>
        <dbReference type="PROSITE-ProRule" id="PRU01319"/>
    </source>
</evidence>
<comment type="function">
    <text evidence="1">Endonuclease that specifically degrades the RNA of RNA-DNA hybrids.</text>
</comment>
<comment type="catalytic activity">
    <reaction evidence="1">
        <text>Endonucleolytic cleavage to 5'-phosphomonoester.</text>
        <dbReference type="EC" id="3.1.26.4"/>
    </reaction>
</comment>
<comment type="cofactor">
    <cofactor evidence="1">
        <name>Mn(2+)</name>
        <dbReference type="ChEBI" id="CHEBI:29035"/>
    </cofactor>
    <cofactor evidence="1">
        <name>Mg(2+)</name>
        <dbReference type="ChEBI" id="CHEBI:18420"/>
    </cofactor>
    <text evidence="1">Manganese or magnesium. Binds 1 divalent metal ion per monomer in the absence of substrate. May bind a second metal ion after substrate binding.</text>
</comment>
<comment type="subcellular location">
    <subcellularLocation>
        <location evidence="1">Cytoplasm</location>
    </subcellularLocation>
</comment>
<comment type="similarity">
    <text evidence="1">Belongs to the RNase HII family.</text>
</comment>
<proteinExistence type="inferred from homology"/>
<protein>
    <recommendedName>
        <fullName evidence="1">Ribonuclease HII</fullName>
        <shortName evidence="1">RNase HII</shortName>
        <ecNumber evidence="1">3.1.26.4</ecNumber>
    </recommendedName>
</protein>
<feature type="chain" id="PRO_1000091668" description="Ribonuclease HII">
    <location>
        <begin position="1"/>
        <end position="234"/>
    </location>
</feature>
<feature type="domain" description="RNase H type-2" evidence="2">
    <location>
        <begin position="16"/>
        <end position="207"/>
    </location>
</feature>
<feature type="binding site" evidence="1">
    <location>
        <position position="22"/>
    </location>
    <ligand>
        <name>a divalent metal cation</name>
        <dbReference type="ChEBI" id="CHEBI:60240"/>
    </ligand>
</feature>
<feature type="binding site" evidence="1">
    <location>
        <position position="23"/>
    </location>
    <ligand>
        <name>a divalent metal cation</name>
        <dbReference type="ChEBI" id="CHEBI:60240"/>
    </ligand>
</feature>
<feature type="binding site" evidence="1">
    <location>
        <position position="115"/>
    </location>
    <ligand>
        <name>a divalent metal cation</name>
        <dbReference type="ChEBI" id="CHEBI:60240"/>
    </ligand>
</feature>
<keyword id="KW-0963">Cytoplasm</keyword>
<keyword id="KW-0255">Endonuclease</keyword>
<keyword id="KW-0378">Hydrolase</keyword>
<keyword id="KW-0464">Manganese</keyword>
<keyword id="KW-0479">Metal-binding</keyword>
<keyword id="KW-0540">Nuclease</keyword>
<gene>
    <name evidence="1" type="primary">rnhB</name>
    <name type="ordered locus">XfasM23_0317</name>
</gene>
<name>RNH2_XYLF2</name>
<organism>
    <name type="scientific">Xylella fastidiosa (strain M23)</name>
    <dbReference type="NCBI Taxonomy" id="405441"/>
    <lineage>
        <taxon>Bacteria</taxon>
        <taxon>Pseudomonadati</taxon>
        <taxon>Pseudomonadota</taxon>
        <taxon>Gammaproteobacteria</taxon>
        <taxon>Lysobacterales</taxon>
        <taxon>Lysobacteraceae</taxon>
        <taxon>Xylella</taxon>
    </lineage>
</organism>